<keyword id="KW-0496">Mitochondrion</keyword>
<keyword id="KW-0520">NAD</keyword>
<keyword id="KW-0560">Oxidoreductase</keyword>
<keyword id="KW-0809">Transit peptide</keyword>
<proteinExistence type="inferred from homology"/>
<protein>
    <recommendedName>
        <fullName>Aldehyde dehydrogenase 2, mitochondrial</fullName>
        <ecNumber>1.2.1.3</ecNumber>
    </recommendedName>
</protein>
<gene>
    <name type="primary">ALD2</name>
    <name type="synonym">ALDH2</name>
</gene>
<feature type="transit peptide" description="Mitochondrion">
    <location>
        <begin position="1"/>
        <end position="21"/>
    </location>
</feature>
<feature type="chain" id="PRO_0000007164" description="Aldehyde dehydrogenase 2, mitochondrial">
    <location>
        <begin position="22"/>
        <end position="511"/>
    </location>
</feature>
<feature type="region of interest" description="Disordered" evidence="4">
    <location>
        <begin position="72"/>
        <end position="92"/>
    </location>
</feature>
<feature type="active site" description="Proton acceptor" evidence="2 3">
    <location>
        <position position="297"/>
    </location>
</feature>
<feature type="active site" description="Nucleophile" evidence="2 3">
    <location>
        <position position="331"/>
    </location>
</feature>
<feature type="binding site" evidence="1">
    <location>
        <begin position="274"/>
        <end position="279"/>
    </location>
    <ligand>
        <name>NAD(+)</name>
        <dbReference type="ChEBI" id="CHEBI:57540"/>
    </ligand>
</feature>
<feature type="site" description="Transition state stabilizer" evidence="1">
    <location>
        <position position="198"/>
    </location>
</feature>
<organism>
    <name type="scientific">Saccharomyces cerevisiae</name>
    <name type="common">Baker's yeast</name>
    <dbReference type="NCBI Taxonomy" id="4932"/>
    <lineage>
        <taxon>Eukaryota</taxon>
        <taxon>Fungi</taxon>
        <taxon>Dikarya</taxon>
        <taxon>Ascomycota</taxon>
        <taxon>Saccharomycotina</taxon>
        <taxon>Saccharomycetes</taxon>
        <taxon>Saccharomycetales</taxon>
        <taxon>Saccharomycetaceae</taxon>
        <taxon>Saccharomyces</taxon>
    </lineage>
</organism>
<dbReference type="EC" id="1.2.1.3"/>
<dbReference type="EMBL" id="Z17314">
    <property type="protein sequence ID" value="CAA78962.1"/>
    <property type="molecule type" value="Genomic_DNA"/>
</dbReference>
<dbReference type="PIR" id="S31308">
    <property type="entry name" value="S31308"/>
</dbReference>
<dbReference type="SMR" id="P32872"/>
<dbReference type="VEuPathDB" id="FungiDB:YER073W"/>
<dbReference type="UniPathway" id="UPA00780">
    <property type="reaction ID" value="UER00768"/>
</dbReference>
<dbReference type="GO" id="GO:0005759">
    <property type="term" value="C:mitochondrial matrix"/>
    <property type="evidence" value="ECO:0007669"/>
    <property type="project" value="UniProtKB-SubCell"/>
</dbReference>
<dbReference type="GO" id="GO:0004029">
    <property type="term" value="F:aldehyde dehydrogenase (NAD+) activity"/>
    <property type="evidence" value="ECO:0007669"/>
    <property type="project" value="UniProtKB-EC"/>
</dbReference>
<dbReference type="GO" id="GO:0006081">
    <property type="term" value="P:aldehyde metabolic process"/>
    <property type="evidence" value="ECO:0007669"/>
    <property type="project" value="InterPro"/>
</dbReference>
<dbReference type="GO" id="GO:0006068">
    <property type="term" value="P:ethanol catabolic process"/>
    <property type="evidence" value="ECO:0007669"/>
    <property type="project" value="UniProtKB-UniPathway"/>
</dbReference>
<dbReference type="FunFam" id="3.40.605.10:FF:000029">
    <property type="entry name" value="Aldehyde dehydrogenase, mitochondrial"/>
    <property type="match status" value="1"/>
</dbReference>
<dbReference type="FunFam" id="3.40.309.10:FF:000001">
    <property type="entry name" value="Mitochondrial aldehyde dehydrogenase 2"/>
    <property type="match status" value="1"/>
</dbReference>
<dbReference type="Gene3D" id="3.40.605.10">
    <property type="entry name" value="Aldehyde Dehydrogenase, Chain A, domain 1"/>
    <property type="match status" value="1"/>
</dbReference>
<dbReference type="Gene3D" id="3.40.309.10">
    <property type="entry name" value="Aldehyde Dehydrogenase, Chain A, domain 2"/>
    <property type="match status" value="1"/>
</dbReference>
<dbReference type="InterPro" id="IPR016161">
    <property type="entry name" value="Ald_DH/histidinol_DH"/>
</dbReference>
<dbReference type="InterPro" id="IPR016163">
    <property type="entry name" value="Ald_DH_C"/>
</dbReference>
<dbReference type="InterPro" id="IPR016160">
    <property type="entry name" value="Ald_DH_CS_CYS"/>
</dbReference>
<dbReference type="InterPro" id="IPR029510">
    <property type="entry name" value="Ald_DH_CS_GLU"/>
</dbReference>
<dbReference type="InterPro" id="IPR016162">
    <property type="entry name" value="Ald_DH_N"/>
</dbReference>
<dbReference type="InterPro" id="IPR015590">
    <property type="entry name" value="Aldehyde_DH_dom"/>
</dbReference>
<dbReference type="InterPro" id="IPR012394">
    <property type="entry name" value="Aldehyde_DH_NAD(P)"/>
</dbReference>
<dbReference type="PANTHER" id="PTHR11699">
    <property type="entry name" value="ALDEHYDE DEHYDROGENASE-RELATED"/>
    <property type="match status" value="1"/>
</dbReference>
<dbReference type="Pfam" id="PF00171">
    <property type="entry name" value="Aldedh"/>
    <property type="match status" value="1"/>
</dbReference>
<dbReference type="PIRSF" id="PIRSF036492">
    <property type="entry name" value="ALDH"/>
    <property type="match status" value="1"/>
</dbReference>
<dbReference type="SUPFAM" id="SSF53720">
    <property type="entry name" value="ALDH-like"/>
    <property type="match status" value="1"/>
</dbReference>
<dbReference type="PROSITE" id="PS00070">
    <property type="entry name" value="ALDEHYDE_DEHYDR_CYS"/>
    <property type="match status" value="1"/>
</dbReference>
<dbReference type="PROSITE" id="PS00687">
    <property type="entry name" value="ALDEHYDE_DEHYDR_GLU"/>
    <property type="match status" value="1"/>
</dbReference>
<evidence type="ECO:0000250" key="1"/>
<evidence type="ECO:0000255" key="2">
    <source>
        <dbReference type="PROSITE-ProRule" id="PRU10007"/>
    </source>
</evidence>
<evidence type="ECO:0000255" key="3">
    <source>
        <dbReference type="PROSITE-ProRule" id="PRU10008"/>
    </source>
</evidence>
<evidence type="ECO:0000256" key="4">
    <source>
        <dbReference type="SAM" id="MobiDB-lite"/>
    </source>
</evidence>
<evidence type="ECO:0000305" key="5"/>
<sequence length="511" mass="56466">MSKSKTKTDKRNQSSLSRIKLSALHYCMSDAEPSIAYLQDNSAFINNEWHNLVLEKIFPVYNPSTEEDITQVSEKSQHDSTEEDITQVSEKSQHDDDKAVVDISERGRLLNILADLIERDRDILAAIEHLDNGKPFDEAYLLDLASVLKELRYTAGWADKLHGTLRFAITIPTFQDLRFLRYTRHEPVGVCGEIIPWNIPLLMYIWKIGPALAAGNTVVLKPEELTPLTALTVATLIKEAGFPPGVVNVVSGYGPTAGAACLSHKDNDKLAFTGSTLVGKVVMKAAAKSNLKKVTLELGGKSPMIVFIDADLDWAVENAHFGVFFNQGQCCIAQSRITVHESIYDEIVERDLEKAKKQVLGNPFESDTRYGPQILKIEFDSIPRLINSAKAEGAKVLCGGGRDDSCVGYYIQPTVFADVTDEMRIAKEEIFGPVITISRFKSVDEAIKRVDNTKYGLAAYVFTKDKAIRISAALKAGTVWVNCVHVASYQIPFGGNKNSGMGRELGEYGLE</sequence>
<accession>P32872</accession>
<name>ALDHY_YEASX</name>
<reference key="1">
    <citation type="thesis" date="1993" institute="Heinrich-Heine University / Duesseldorf" country="Germany">
        <authorList>
            <person name="Thielen J."/>
        </authorList>
    </citation>
    <scope>NUCLEOTIDE SEQUENCE [GENOMIC DNA]</scope>
</reference>
<comment type="catalytic activity">
    <reaction>
        <text>an aldehyde + NAD(+) + H2O = a carboxylate + NADH + 2 H(+)</text>
        <dbReference type="Rhea" id="RHEA:16185"/>
        <dbReference type="ChEBI" id="CHEBI:15377"/>
        <dbReference type="ChEBI" id="CHEBI:15378"/>
        <dbReference type="ChEBI" id="CHEBI:17478"/>
        <dbReference type="ChEBI" id="CHEBI:29067"/>
        <dbReference type="ChEBI" id="CHEBI:57540"/>
        <dbReference type="ChEBI" id="CHEBI:57945"/>
        <dbReference type="EC" id="1.2.1.3"/>
    </reaction>
</comment>
<comment type="pathway">
    <text>Alcohol metabolism; ethanol degradation; acetate from ethanol: step 2/2.</text>
</comment>
<comment type="subcellular location">
    <subcellularLocation>
        <location evidence="5">Mitochondrion matrix</location>
    </subcellularLocation>
</comment>
<comment type="similarity">
    <text evidence="5">Belongs to the aldehyde dehydrogenase family.</text>
</comment>
<comment type="caution">
    <text evidence="5">Is not present in yeast genome.</text>
</comment>